<feature type="chain" id="PRO_0000048041" description="DNA-directed RNA polymerase subunit beta">
    <location>
        <begin position="1"/>
        <end position="1075"/>
    </location>
</feature>
<organism>
    <name type="scientific">Pinus thunbergii</name>
    <name type="common">Japanese black pine</name>
    <name type="synonym">Pinus thunbergiana</name>
    <dbReference type="NCBI Taxonomy" id="3350"/>
    <lineage>
        <taxon>Eukaryota</taxon>
        <taxon>Viridiplantae</taxon>
        <taxon>Streptophyta</taxon>
        <taxon>Embryophyta</taxon>
        <taxon>Tracheophyta</taxon>
        <taxon>Spermatophyta</taxon>
        <taxon>Pinopsida</taxon>
        <taxon>Pinidae</taxon>
        <taxon>Conifers I</taxon>
        <taxon>Pinales</taxon>
        <taxon>Pinaceae</taxon>
        <taxon>Pinus</taxon>
        <taxon>Pinus subgen. Pinus</taxon>
    </lineage>
</organism>
<protein>
    <recommendedName>
        <fullName evidence="1">DNA-directed RNA polymerase subunit beta</fullName>
        <ecNumber evidence="1">2.7.7.6</ecNumber>
    </recommendedName>
    <alternativeName>
        <fullName evidence="1">PEP</fullName>
    </alternativeName>
    <alternativeName>
        <fullName evidence="1">Plastid-encoded RNA polymerase subunit beta</fullName>
        <shortName evidence="1">RNA polymerase subunit beta</shortName>
    </alternativeName>
</protein>
<keyword id="KW-0150">Chloroplast</keyword>
<keyword id="KW-0240">DNA-directed RNA polymerase</keyword>
<keyword id="KW-0548">Nucleotidyltransferase</keyword>
<keyword id="KW-0934">Plastid</keyword>
<keyword id="KW-0804">Transcription</keyword>
<keyword id="KW-0808">Transferase</keyword>
<reference key="1">
    <citation type="journal article" date="1994" name="Proc. Natl. Acad. Sci. U.S.A.">
        <title>Loss of all ndh genes as determined by sequencing the entire chloroplast genome of the black pine Pinus thunbergii.</title>
        <authorList>
            <person name="Wakasugi T."/>
            <person name="Tsudzuki J."/>
            <person name="Ito S."/>
            <person name="Nakashima K."/>
            <person name="Tsudzuki T."/>
            <person name="Sugiura M."/>
        </authorList>
    </citation>
    <scope>NUCLEOTIDE SEQUENCE [LARGE SCALE GENOMIC DNA]</scope>
</reference>
<evidence type="ECO:0000255" key="1">
    <source>
        <dbReference type="HAMAP-Rule" id="MF_01321"/>
    </source>
</evidence>
<name>RPOB_PINTH</name>
<gene>
    <name evidence="1" type="primary">rpoB</name>
</gene>
<comment type="function">
    <text evidence="1">DNA-dependent RNA polymerase catalyzes the transcription of DNA into RNA using the four ribonucleoside triphosphates as substrates.</text>
</comment>
<comment type="catalytic activity">
    <reaction evidence="1">
        <text>RNA(n) + a ribonucleoside 5'-triphosphate = RNA(n+1) + diphosphate</text>
        <dbReference type="Rhea" id="RHEA:21248"/>
        <dbReference type="Rhea" id="RHEA-COMP:14527"/>
        <dbReference type="Rhea" id="RHEA-COMP:17342"/>
        <dbReference type="ChEBI" id="CHEBI:33019"/>
        <dbReference type="ChEBI" id="CHEBI:61557"/>
        <dbReference type="ChEBI" id="CHEBI:140395"/>
        <dbReference type="EC" id="2.7.7.6"/>
    </reaction>
</comment>
<comment type="subunit">
    <text evidence="1">In plastids the minimal PEP RNA polymerase catalytic core is composed of four subunits: alpha, beta, beta', and beta''. When a (nuclear-encoded) sigma factor is associated with the core the holoenzyme is formed, which can initiate transcription.</text>
</comment>
<comment type="subcellular location">
    <subcellularLocation>
        <location>Plastid</location>
        <location>Chloroplast</location>
    </subcellularLocation>
</comment>
<comment type="similarity">
    <text evidence="1">Belongs to the RNA polymerase beta chain family.</text>
</comment>
<accession>P41607</accession>
<geneLocation type="chloroplast"/>
<dbReference type="EC" id="2.7.7.6" evidence="1"/>
<dbReference type="EMBL" id="D17510">
    <property type="protein sequence ID" value="BAA04326.1"/>
    <property type="molecule type" value="Genomic_DNA"/>
</dbReference>
<dbReference type="PIR" id="T07448">
    <property type="entry name" value="T07448"/>
</dbReference>
<dbReference type="RefSeq" id="NP_042369.1">
    <property type="nucleotide sequence ID" value="NC_001631.1"/>
</dbReference>
<dbReference type="SMR" id="P41607"/>
<dbReference type="GeneID" id="809068"/>
<dbReference type="GO" id="GO:0009507">
    <property type="term" value="C:chloroplast"/>
    <property type="evidence" value="ECO:0007669"/>
    <property type="project" value="UniProtKB-SubCell"/>
</dbReference>
<dbReference type="GO" id="GO:0000428">
    <property type="term" value="C:DNA-directed RNA polymerase complex"/>
    <property type="evidence" value="ECO:0007669"/>
    <property type="project" value="UniProtKB-KW"/>
</dbReference>
<dbReference type="GO" id="GO:0005739">
    <property type="term" value="C:mitochondrion"/>
    <property type="evidence" value="ECO:0007669"/>
    <property type="project" value="GOC"/>
</dbReference>
<dbReference type="GO" id="GO:0003677">
    <property type="term" value="F:DNA binding"/>
    <property type="evidence" value="ECO:0007669"/>
    <property type="project" value="UniProtKB-UniRule"/>
</dbReference>
<dbReference type="GO" id="GO:0003899">
    <property type="term" value="F:DNA-directed RNA polymerase activity"/>
    <property type="evidence" value="ECO:0007669"/>
    <property type="project" value="UniProtKB-UniRule"/>
</dbReference>
<dbReference type="GO" id="GO:0032549">
    <property type="term" value="F:ribonucleoside binding"/>
    <property type="evidence" value="ECO:0007669"/>
    <property type="project" value="InterPro"/>
</dbReference>
<dbReference type="GO" id="GO:0006351">
    <property type="term" value="P:DNA-templated transcription"/>
    <property type="evidence" value="ECO:0007669"/>
    <property type="project" value="UniProtKB-UniRule"/>
</dbReference>
<dbReference type="CDD" id="cd00653">
    <property type="entry name" value="RNA_pol_B_RPB2"/>
    <property type="match status" value="1"/>
</dbReference>
<dbReference type="Gene3D" id="2.40.50.100">
    <property type="match status" value="1"/>
</dbReference>
<dbReference type="Gene3D" id="2.40.50.150">
    <property type="match status" value="1"/>
</dbReference>
<dbReference type="Gene3D" id="3.90.1100.10">
    <property type="match status" value="1"/>
</dbReference>
<dbReference type="Gene3D" id="2.30.150.10">
    <property type="entry name" value="DNA-directed RNA polymerase, beta subunit, external 1 domain"/>
    <property type="match status" value="1"/>
</dbReference>
<dbReference type="Gene3D" id="2.40.270.10">
    <property type="entry name" value="DNA-directed RNA polymerase, subunit 2, domain 6"/>
    <property type="match status" value="1"/>
</dbReference>
<dbReference type="Gene3D" id="3.90.1800.10">
    <property type="entry name" value="RNA polymerase alpha subunit dimerisation domain"/>
    <property type="match status" value="1"/>
</dbReference>
<dbReference type="Gene3D" id="3.90.1110.10">
    <property type="entry name" value="RNA polymerase Rpb2, domain 2"/>
    <property type="match status" value="1"/>
</dbReference>
<dbReference type="HAMAP" id="MF_01321">
    <property type="entry name" value="RNApol_bact_RpoB"/>
    <property type="match status" value="1"/>
</dbReference>
<dbReference type="InterPro" id="IPR042107">
    <property type="entry name" value="DNA-dir_RNA_pol_bsu_ext_1_sf"/>
</dbReference>
<dbReference type="InterPro" id="IPR015712">
    <property type="entry name" value="DNA-dir_RNA_pol_su2"/>
</dbReference>
<dbReference type="InterPro" id="IPR007120">
    <property type="entry name" value="DNA-dir_RNAP_su2_dom"/>
</dbReference>
<dbReference type="InterPro" id="IPR037033">
    <property type="entry name" value="DNA-dir_RNAP_su2_hyb_sf"/>
</dbReference>
<dbReference type="InterPro" id="IPR010243">
    <property type="entry name" value="RNA_pol_bsu_bac"/>
</dbReference>
<dbReference type="InterPro" id="IPR007121">
    <property type="entry name" value="RNA_pol_bsu_CS"/>
</dbReference>
<dbReference type="InterPro" id="IPR007644">
    <property type="entry name" value="RNA_pol_bsu_protrusion"/>
</dbReference>
<dbReference type="InterPro" id="IPR007642">
    <property type="entry name" value="RNA_pol_Rpb2_2"/>
</dbReference>
<dbReference type="InterPro" id="IPR037034">
    <property type="entry name" value="RNA_pol_Rpb2_2_sf"/>
</dbReference>
<dbReference type="InterPro" id="IPR007645">
    <property type="entry name" value="RNA_pol_Rpb2_3"/>
</dbReference>
<dbReference type="InterPro" id="IPR007641">
    <property type="entry name" value="RNA_pol_Rpb2_7"/>
</dbReference>
<dbReference type="InterPro" id="IPR014724">
    <property type="entry name" value="RNA_pol_RPB2_OB-fold"/>
</dbReference>
<dbReference type="NCBIfam" id="NF001616">
    <property type="entry name" value="PRK00405.1"/>
    <property type="match status" value="1"/>
</dbReference>
<dbReference type="PANTHER" id="PTHR20856">
    <property type="entry name" value="DNA-DIRECTED RNA POLYMERASE I SUBUNIT 2"/>
    <property type="match status" value="1"/>
</dbReference>
<dbReference type="Pfam" id="PF04563">
    <property type="entry name" value="RNA_pol_Rpb2_1"/>
    <property type="match status" value="1"/>
</dbReference>
<dbReference type="Pfam" id="PF04561">
    <property type="entry name" value="RNA_pol_Rpb2_2"/>
    <property type="match status" value="1"/>
</dbReference>
<dbReference type="Pfam" id="PF04565">
    <property type="entry name" value="RNA_pol_Rpb2_3"/>
    <property type="match status" value="1"/>
</dbReference>
<dbReference type="Pfam" id="PF00562">
    <property type="entry name" value="RNA_pol_Rpb2_6"/>
    <property type="match status" value="1"/>
</dbReference>
<dbReference type="Pfam" id="PF04560">
    <property type="entry name" value="RNA_pol_Rpb2_7"/>
    <property type="match status" value="1"/>
</dbReference>
<dbReference type="SUPFAM" id="SSF64484">
    <property type="entry name" value="beta and beta-prime subunits of DNA dependent RNA-polymerase"/>
    <property type="match status" value="1"/>
</dbReference>
<dbReference type="PROSITE" id="PS01166">
    <property type="entry name" value="RNA_POL_BETA"/>
    <property type="match status" value="1"/>
</dbReference>
<proteinExistence type="inferred from homology"/>
<sequence length="1075" mass="122471">MRLDENEGAFTIPEFGKIQFEGFCRFIDQGLMEELHNFPKIEDIDKEIEFRLFGNEYELAEPFIKERDAVYQSLTYYSELYVPARSIRRNSRKIQKQTVFLGNIPLMNSHGTFVVNGIYRVVVNQILISPGIYYRSELDHNRINYIYTGTLISDWGRRSKLEIDVGERIWARVSRKQKISIPVLLSAMGLNLEEILDNTRYPERFLFLLKKKGRWEREEYLWSREKAILEFYKKLYCISGDLVFSESLCKELQKKFFRKRCELGKIGRRNLNQKLNLDIPENEIFSLPQDVLAAVDYLIGVKFGMGTLDDIDHLRNRRIRSVADLLQNQFRLALGRLEDAVKRTIRRATKRRSTPQNLVTSTLLKNTFQDFFGSHPLSQFLDQTNPLTEIAHGRKLSHLGPGGLTGRTASFRTRDIHPSYYGRICPIDTSEGMNAGLVASLSIHAKIGDCGSLQSPFYKISERSREEHMVYLLPGEDEDEYYRIATGNSLALNQGIQEEQITPARYRQEFIVIAWEQIHFRSIFPFQYFSVGVSLIPFLEHNDANRALMGSNMQRQAVPLFRPEKCIAGTGLEGQAALDSGSVAIATQEGRIEYIDAVNITSSVNGDTVRTESVIYQRSNTNTCTHQKPQIHQGECVKKGQILADGATTVGGELSLGKNVLVAYMPWEGYNFEDAILISERLVYEDIYTSFHIVRYRIEICMTSQGPERITREIPHLDAHLLRHLDENGLVMLGSWIETGDVLVGKLTPQTIEESLCTPEGRLLQTIFGIEVSTARENCLRAPIGGRGRVIDVRWINRVDDSGDNAETVHVYISQKRKIQVGDKVSGRHGNKGIISIVLPRQDMPYLQNGIPVDMVLNPLGVPSRMNVGQIFECLPGLAGNPMNKHYRITPFDEKYEREASRKLVFPELYKASEQTANPWVFEPDHPGKHRLIDGRTGDVFEQPVTIGKAYMSKLSHQVDEKIHARSSGPYARVTQQPLRGKSKRGGQRIGEMEVWALEGFGVAYILQEMLTLKSDHIRTRNEVLGAIITGGPIPKPDTAPESFRLLIRELRSLALELNHAIISEKNFQIDREEV</sequence>